<accession>B2GIA9</accession>
<protein>
    <recommendedName>
        <fullName evidence="1">D-aminoacyl-tRNA deacylase</fullName>
        <shortName evidence="1">DTD</shortName>
        <ecNumber evidence="1">3.1.1.96</ecNumber>
    </recommendedName>
    <alternativeName>
        <fullName evidence="1">Gly-tRNA(Ala) deacylase</fullName>
    </alternativeName>
</protein>
<sequence length="150" mass="15955">MRIVLQVVSRASVTVAEETVGEIEGPGLLALVGLTHTDTPETVSRLAGKVAGLRILPGETSCADGPSPVLAVSQFTLYGDVRKGRRPSWSRAAPGQQSEPLFEAFVAALRERGIPVRTGRFGAHMEVSLVNDGPVTVLVDSDELDRPRRG</sequence>
<reference key="1">
    <citation type="journal article" date="2008" name="J. Bacteriol.">
        <title>Complete genome sequence of the soil actinomycete Kocuria rhizophila.</title>
        <authorList>
            <person name="Takarada H."/>
            <person name="Sekine M."/>
            <person name="Kosugi H."/>
            <person name="Matsuo Y."/>
            <person name="Fujisawa T."/>
            <person name="Omata S."/>
            <person name="Kishi E."/>
            <person name="Shimizu A."/>
            <person name="Tsukatani N."/>
            <person name="Tanikawa S."/>
            <person name="Fujita N."/>
            <person name="Harayama S."/>
        </authorList>
    </citation>
    <scope>NUCLEOTIDE SEQUENCE [LARGE SCALE GENOMIC DNA]</scope>
    <source>
        <strain>ATCC 9341 / DSM 348 / NBRC 103217 / DC2201</strain>
    </source>
</reference>
<gene>
    <name evidence="1" type="primary">dtd</name>
    <name type="ordered locus">KRH_13540</name>
</gene>
<proteinExistence type="inferred from homology"/>
<name>DTD_KOCRD</name>
<feature type="chain" id="PRO_1000127545" description="D-aminoacyl-tRNA deacylase">
    <location>
        <begin position="1"/>
        <end position="150"/>
    </location>
</feature>
<feature type="short sequence motif" description="Gly-cisPro motif, important for rejection of L-amino acids" evidence="1">
    <location>
        <begin position="133"/>
        <end position="134"/>
    </location>
</feature>
<dbReference type="EC" id="3.1.1.96" evidence="1"/>
<dbReference type="EMBL" id="AP009152">
    <property type="protein sequence ID" value="BAG29701.1"/>
    <property type="molecule type" value="Genomic_DNA"/>
</dbReference>
<dbReference type="RefSeq" id="WP_012398422.1">
    <property type="nucleotide sequence ID" value="NC_010617.1"/>
</dbReference>
<dbReference type="SMR" id="B2GIA9"/>
<dbReference type="STRING" id="378753.KRH_13540"/>
<dbReference type="KEGG" id="krh:KRH_13540"/>
<dbReference type="eggNOG" id="COG1490">
    <property type="taxonomic scope" value="Bacteria"/>
</dbReference>
<dbReference type="HOGENOM" id="CLU_076901_1_2_11"/>
<dbReference type="OrthoDB" id="9801395at2"/>
<dbReference type="Proteomes" id="UP000008838">
    <property type="component" value="Chromosome"/>
</dbReference>
<dbReference type="GO" id="GO:0005737">
    <property type="term" value="C:cytoplasm"/>
    <property type="evidence" value="ECO:0007669"/>
    <property type="project" value="UniProtKB-SubCell"/>
</dbReference>
<dbReference type="GO" id="GO:0051500">
    <property type="term" value="F:D-tyrosyl-tRNA(Tyr) deacylase activity"/>
    <property type="evidence" value="ECO:0007669"/>
    <property type="project" value="TreeGrafter"/>
</dbReference>
<dbReference type="GO" id="GO:0106026">
    <property type="term" value="F:Gly-tRNA(Ala) deacylase activity"/>
    <property type="evidence" value="ECO:0007669"/>
    <property type="project" value="UniProtKB-UniRule"/>
</dbReference>
<dbReference type="GO" id="GO:0043908">
    <property type="term" value="F:Ser(Gly)-tRNA(Ala) hydrolase activity"/>
    <property type="evidence" value="ECO:0007669"/>
    <property type="project" value="UniProtKB-UniRule"/>
</dbReference>
<dbReference type="GO" id="GO:0000049">
    <property type="term" value="F:tRNA binding"/>
    <property type="evidence" value="ECO:0007669"/>
    <property type="project" value="UniProtKB-UniRule"/>
</dbReference>
<dbReference type="GO" id="GO:0019478">
    <property type="term" value="P:D-amino acid catabolic process"/>
    <property type="evidence" value="ECO:0007669"/>
    <property type="project" value="UniProtKB-UniRule"/>
</dbReference>
<dbReference type="FunFam" id="3.50.80.10:FF:000001">
    <property type="entry name" value="D-aminoacyl-tRNA deacylase"/>
    <property type="match status" value="1"/>
</dbReference>
<dbReference type="Gene3D" id="3.50.80.10">
    <property type="entry name" value="D-tyrosyl-tRNA(Tyr) deacylase"/>
    <property type="match status" value="1"/>
</dbReference>
<dbReference type="HAMAP" id="MF_00518">
    <property type="entry name" value="Deacylase_Dtd"/>
    <property type="match status" value="1"/>
</dbReference>
<dbReference type="InterPro" id="IPR003732">
    <property type="entry name" value="Daa-tRNA_deacyls_DTD"/>
</dbReference>
<dbReference type="InterPro" id="IPR023509">
    <property type="entry name" value="DTD-like_sf"/>
</dbReference>
<dbReference type="NCBIfam" id="TIGR00256">
    <property type="entry name" value="D-aminoacyl-tRNA deacylase"/>
    <property type="match status" value="1"/>
</dbReference>
<dbReference type="PANTHER" id="PTHR10472:SF5">
    <property type="entry name" value="D-AMINOACYL-TRNA DEACYLASE 1"/>
    <property type="match status" value="1"/>
</dbReference>
<dbReference type="PANTHER" id="PTHR10472">
    <property type="entry name" value="D-TYROSYL-TRNA TYR DEACYLASE"/>
    <property type="match status" value="1"/>
</dbReference>
<dbReference type="Pfam" id="PF02580">
    <property type="entry name" value="Tyr_Deacylase"/>
    <property type="match status" value="1"/>
</dbReference>
<dbReference type="SUPFAM" id="SSF69500">
    <property type="entry name" value="DTD-like"/>
    <property type="match status" value="1"/>
</dbReference>
<evidence type="ECO:0000255" key="1">
    <source>
        <dbReference type="HAMAP-Rule" id="MF_00518"/>
    </source>
</evidence>
<keyword id="KW-0963">Cytoplasm</keyword>
<keyword id="KW-0378">Hydrolase</keyword>
<keyword id="KW-1185">Reference proteome</keyword>
<keyword id="KW-0694">RNA-binding</keyword>
<keyword id="KW-0820">tRNA-binding</keyword>
<organism>
    <name type="scientific">Kocuria rhizophila (strain ATCC 9341 / DSM 348 / NBRC 103217 / DC2201)</name>
    <dbReference type="NCBI Taxonomy" id="378753"/>
    <lineage>
        <taxon>Bacteria</taxon>
        <taxon>Bacillati</taxon>
        <taxon>Actinomycetota</taxon>
        <taxon>Actinomycetes</taxon>
        <taxon>Micrococcales</taxon>
        <taxon>Micrococcaceae</taxon>
        <taxon>Kocuria</taxon>
    </lineage>
</organism>
<comment type="function">
    <text evidence="1">An aminoacyl-tRNA editing enzyme that deacylates mischarged D-aminoacyl-tRNAs. Also deacylates mischarged glycyl-tRNA(Ala), protecting cells against glycine mischarging by AlaRS. Acts via tRNA-based rather than protein-based catalysis; rejects L-amino acids rather than detecting D-amino acids in the active site. By recycling D-aminoacyl-tRNA to D-amino acids and free tRNA molecules, this enzyme counteracts the toxicity associated with the formation of D-aminoacyl-tRNA entities in vivo and helps enforce protein L-homochirality.</text>
</comment>
<comment type="catalytic activity">
    <reaction evidence="1">
        <text>glycyl-tRNA(Ala) + H2O = tRNA(Ala) + glycine + H(+)</text>
        <dbReference type="Rhea" id="RHEA:53744"/>
        <dbReference type="Rhea" id="RHEA-COMP:9657"/>
        <dbReference type="Rhea" id="RHEA-COMP:13640"/>
        <dbReference type="ChEBI" id="CHEBI:15377"/>
        <dbReference type="ChEBI" id="CHEBI:15378"/>
        <dbReference type="ChEBI" id="CHEBI:57305"/>
        <dbReference type="ChEBI" id="CHEBI:78442"/>
        <dbReference type="ChEBI" id="CHEBI:78522"/>
        <dbReference type="EC" id="3.1.1.96"/>
    </reaction>
</comment>
<comment type="catalytic activity">
    <reaction evidence="1">
        <text>a D-aminoacyl-tRNA + H2O = a tRNA + a D-alpha-amino acid + H(+)</text>
        <dbReference type="Rhea" id="RHEA:13953"/>
        <dbReference type="Rhea" id="RHEA-COMP:10123"/>
        <dbReference type="Rhea" id="RHEA-COMP:10124"/>
        <dbReference type="ChEBI" id="CHEBI:15377"/>
        <dbReference type="ChEBI" id="CHEBI:15378"/>
        <dbReference type="ChEBI" id="CHEBI:59871"/>
        <dbReference type="ChEBI" id="CHEBI:78442"/>
        <dbReference type="ChEBI" id="CHEBI:79333"/>
        <dbReference type="EC" id="3.1.1.96"/>
    </reaction>
</comment>
<comment type="subunit">
    <text evidence="1">Homodimer.</text>
</comment>
<comment type="subcellular location">
    <subcellularLocation>
        <location evidence="1">Cytoplasm</location>
    </subcellularLocation>
</comment>
<comment type="domain">
    <text evidence="1">A Gly-cisPro motif from one monomer fits into the active site of the other monomer to allow specific chiral rejection of L-amino acids.</text>
</comment>
<comment type="similarity">
    <text evidence="1">Belongs to the DTD family.</text>
</comment>